<sequence>MTLQEEIIRQLGVKASIAPQEEIRKTVDFLKAYLRKHSFLKTYVLGISGGQDSTLAGKLAQMAIAELREETSDQAYQFIAVRLPYGVQTDEADAQKALAFIMPDQTLTINIKAAVDGQVEALQAAGVEISDFNKGNIKARQRMISQYAIAGQMAGAVIGTDHAAENITGFFTKFGDGGADILPLFRLNKRQGKALLKVLGADAALYEKVPTADLEDQKPGLADEVALGVTYQDIDDYLEGKLISKVAQATIEKWWHKGQHKRHLPITIFDDFWK</sequence>
<dbReference type="EC" id="6.3.1.5" evidence="1"/>
<dbReference type="EMBL" id="AE014074">
    <property type="protein sequence ID" value="AAM79999.1"/>
    <property type="molecule type" value="Genomic_DNA"/>
</dbReference>
<dbReference type="RefSeq" id="WP_011054845.1">
    <property type="nucleotide sequence ID" value="NC_004070.1"/>
</dbReference>
<dbReference type="SMR" id="P0DC64"/>
<dbReference type="GeneID" id="69900480"/>
<dbReference type="KEGG" id="spg:SpyM3_1392"/>
<dbReference type="HOGENOM" id="CLU_059327_3_0_9"/>
<dbReference type="UniPathway" id="UPA00253">
    <property type="reaction ID" value="UER00333"/>
</dbReference>
<dbReference type="Proteomes" id="UP000000564">
    <property type="component" value="Chromosome"/>
</dbReference>
<dbReference type="GO" id="GO:0005737">
    <property type="term" value="C:cytoplasm"/>
    <property type="evidence" value="ECO:0007669"/>
    <property type="project" value="InterPro"/>
</dbReference>
<dbReference type="GO" id="GO:0005524">
    <property type="term" value="F:ATP binding"/>
    <property type="evidence" value="ECO:0007669"/>
    <property type="project" value="UniProtKB-UniRule"/>
</dbReference>
<dbReference type="GO" id="GO:0004359">
    <property type="term" value="F:glutaminase activity"/>
    <property type="evidence" value="ECO:0007669"/>
    <property type="project" value="InterPro"/>
</dbReference>
<dbReference type="GO" id="GO:0046872">
    <property type="term" value="F:metal ion binding"/>
    <property type="evidence" value="ECO:0007669"/>
    <property type="project" value="UniProtKB-KW"/>
</dbReference>
<dbReference type="GO" id="GO:0003952">
    <property type="term" value="F:NAD+ synthase (glutamine-hydrolyzing) activity"/>
    <property type="evidence" value="ECO:0007669"/>
    <property type="project" value="InterPro"/>
</dbReference>
<dbReference type="GO" id="GO:0008795">
    <property type="term" value="F:NAD+ synthase activity"/>
    <property type="evidence" value="ECO:0007669"/>
    <property type="project" value="UniProtKB-UniRule"/>
</dbReference>
<dbReference type="GO" id="GO:0009435">
    <property type="term" value="P:NAD biosynthetic process"/>
    <property type="evidence" value="ECO:0007669"/>
    <property type="project" value="UniProtKB-UniRule"/>
</dbReference>
<dbReference type="CDD" id="cd00553">
    <property type="entry name" value="NAD_synthase"/>
    <property type="match status" value="1"/>
</dbReference>
<dbReference type="FunFam" id="3.40.50.620:FF:000015">
    <property type="entry name" value="NH(3)-dependent NAD(+) synthetase"/>
    <property type="match status" value="1"/>
</dbReference>
<dbReference type="Gene3D" id="3.40.50.620">
    <property type="entry name" value="HUPs"/>
    <property type="match status" value="1"/>
</dbReference>
<dbReference type="HAMAP" id="MF_00193">
    <property type="entry name" value="NadE_ammonia_dep"/>
    <property type="match status" value="1"/>
</dbReference>
<dbReference type="InterPro" id="IPR022310">
    <property type="entry name" value="NAD/GMP_synthase"/>
</dbReference>
<dbReference type="InterPro" id="IPR003694">
    <property type="entry name" value="NAD_synthase"/>
</dbReference>
<dbReference type="InterPro" id="IPR022926">
    <property type="entry name" value="NH(3)-dep_NAD(+)_synth"/>
</dbReference>
<dbReference type="InterPro" id="IPR014729">
    <property type="entry name" value="Rossmann-like_a/b/a_fold"/>
</dbReference>
<dbReference type="NCBIfam" id="TIGR00552">
    <property type="entry name" value="nadE"/>
    <property type="match status" value="1"/>
</dbReference>
<dbReference type="NCBIfam" id="NF001979">
    <property type="entry name" value="PRK00768.1"/>
    <property type="match status" value="1"/>
</dbReference>
<dbReference type="PANTHER" id="PTHR23090">
    <property type="entry name" value="NH 3 /GLUTAMINE-DEPENDENT NAD + SYNTHETASE"/>
    <property type="match status" value="1"/>
</dbReference>
<dbReference type="PANTHER" id="PTHR23090:SF7">
    <property type="entry name" value="NH(3)-DEPENDENT NAD(+) SYNTHETASE"/>
    <property type="match status" value="1"/>
</dbReference>
<dbReference type="Pfam" id="PF02540">
    <property type="entry name" value="NAD_synthase"/>
    <property type="match status" value="1"/>
</dbReference>
<dbReference type="SUPFAM" id="SSF52402">
    <property type="entry name" value="Adenine nucleotide alpha hydrolases-like"/>
    <property type="match status" value="1"/>
</dbReference>
<protein>
    <recommendedName>
        <fullName evidence="1">NH(3)-dependent NAD(+) synthetase</fullName>
        <ecNumber evidence="1">6.3.1.5</ecNumber>
    </recommendedName>
</protein>
<organism>
    <name type="scientific">Streptococcus pyogenes serotype M3 (strain ATCC BAA-595 / MGAS315)</name>
    <dbReference type="NCBI Taxonomy" id="198466"/>
    <lineage>
        <taxon>Bacteria</taxon>
        <taxon>Bacillati</taxon>
        <taxon>Bacillota</taxon>
        <taxon>Bacilli</taxon>
        <taxon>Lactobacillales</taxon>
        <taxon>Streptococcaceae</taxon>
        <taxon>Streptococcus</taxon>
    </lineage>
</organism>
<reference key="1">
    <citation type="journal article" date="2002" name="Proc. Natl. Acad. Sci. U.S.A.">
        <title>Genome sequence of a serotype M3 strain of group A Streptococcus: phage-encoded toxins, the high-virulence phenotype, and clone emergence.</title>
        <authorList>
            <person name="Beres S.B."/>
            <person name="Sylva G.L."/>
            <person name="Barbian K.D."/>
            <person name="Lei B."/>
            <person name="Hoff J.S."/>
            <person name="Mammarella N.D."/>
            <person name="Liu M.-Y."/>
            <person name="Smoot J.C."/>
            <person name="Porcella S.F."/>
            <person name="Parkins L.D."/>
            <person name="Campbell D.S."/>
            <person name="Smith T.M."/>
            <person name="McCormick J.K."/>
            <person name="Leung D.Y.M."/>
            <person name="Schlievert P.M."/>
            <person name="Musser J.M."/>
        </authorList>
    </citation>
    <scope>NUCLEOTIDE SEQUENCE [LARGE SCALE GENOMIC DNA]</scope>
    <source>
        <strain>ATCC BAA-595 / MGAS315</strain>
    </source>
</reference>
<evidence type="ECO:0000255" key="1">
    <source>
        <dbReference type="HAMAP-Rule" id="MF_00193"/>
    </source>
</evidence>
<comment type="function">
    <text evidence="1">Catalyzes the ATP-dependent amidation of deamido-NAD to form NAD. Uses ammonia as a nitrogen source.</text>
</comment>
<comment type="catalytic activity">
    <reaction evidence="1">
        <text>deamido-NAD(+) + NH4(+) + ATP = AMP + diphosphate + NAD(+) + H(+)</text>
        <dbReference type="Rhea" id="RHEA:21188"/>
        <dbReference type="ChEBI" id="CHEBI:15378"/>
        <dbReference type="ChEBI" id="CHEBI:28938"/>
        <dbReference type="ChEBI" id="CHEBI:30616"/>
        <dbReference type="ChEBI" id="CHEBI:33019"/>
        <dbReference type="ChEBI" id="CHEBI:57540"/>
        <dbReference type="ChEBI" id="CHEBI:58437"/>
        <dbReference type="ChEBI" id="CHEBI:456215"/>
        <dbReference type="EC" id="6.3.1.5"/>
    </reaction>
</comment>
<comment type="pathway">
    <text evidence="1">Cofactor biosynthesis; NAD(+) biosynthesis; NAD(+) from deamido-NAD(+) (ammonia route): step 1/1.</text>
</comment>
<comment type="subunit">
    <text evidence="1">Homodimer.</text>
</comment>
<comment type="similarity">
    <text evidence="1">Belongs to the NAD synthetase family.</text>
</comment>
<name>NADE_STRP3</name>
<gene>
    <name evidence="1" type="primary">nadE</name>
    <name type="ordered locus">SpyM3_1392</name>
</gene>
<keyword id="KW-0067">ATP-binding</keyword>
<keyword id="KW-0436">Ligase</keyword>
<keyword id="KW-0460">Magnesium</keyword>
<keyword id="KW-0479">Metal-binding</keyword>
<keyword id="KW-0520">NAD</keyword>
<keyword id="KW-0547">Nucleotide-binding</keyword>
<proteinExistence type="inferred from homology"/>
<feature type="chain" id="PRO_0000152209" description="NH(3)-dependent NAD(+) synthetase">
    <location>
        <begin position="1"/>
        <end position="274"/>
    </location>
</feature>
<feature type="binding site" evidence="1">
    <location>
        <begin position="46"/>
        <end position="53"/>
    </location>
    <ligand>
        <name>ATP</name>
        <dbReference type="ChEBI" id="CHEBI:30616"/>
    </ligand>
</feature>
<feature type="binding site" evidence="1">
    <location>
        <position position="52"/>
    </location>
    <ligand>
        <name>Mg(2+)</name>
        <dbReference type="ChEBI" id="CHEBI:18420"/>
    </ligand>
</feature>
<feature type="binding site" evidence="1">
    <location>
        <position position="140"/>
    </location>
    <ligand>
        <name>deamido-NAD(+)</name>
        <dbReference type="ChEBI" id="CHEBI:58437"/>
    </ligand>
</feature>
<feature type="binding site" evidence="1">
    <location>
        <position position="160"/>
    </location>
    <ligand>
        <name>ATP</name>
        <dbReference type="ChEBI" id="CHEBI:30616"/>
    </ligand>
</feature>
<feature type="binding site" evidence="1">
    <location>
        <position position="165"/>
    </location>
    <ligand>
        <name>Mg(2+)</name>
        <dbReference type="ChEBI" id="CHEBI:18420"/>
    </ligand>
</feature>
<feature type="binding site" evidence="1">
    <location>
        <position position="173"/>
    </location>
    <ligand>
        <name>deamido-NAD(+)</name>
        <dbReference type="ChEBI" id="CHEBI:58437"/>
    </ligand>
</feature>
<feature type="binding site" evidence="1">
    <location>
        <position position="180"/>
    </location>
    <ligand>
        <name>deamido-NAD(+)</name>
        <dbReference type="ChEBI" id="CHEBI:58437"/>
    </ligand>
</feature>
<feature type="binding site" evidence="1">
    <location>
        <position position="189"/>
    </location>
    <ligand>
        <name>ATP</name>
        <dbReference type="ChEBI" id="CHEBI:30616"/>
    </ligand>
</feature>
<feature type="binding site" evidence="1">
    <location>
        <position position="211"/>
    </location>
    <ligand>
        <name>ATP</name>
        <dbReference type="ChEBI" id="CHEBI:30616"/>
    </ligand>
</feature>
<feature type="binding site" evidence="1">
    <location>
        <begin position="260"/>
        <end position="261"/>
    </location>
    <ligand>
        <name>deamido-NAD(+)</name>
        <dbReference type="ChEBI" id="CHEBI:58437"/>
    </ligand>
</feature>
<accession>P0DC64</accession>
<accession>Q8K6D4</accession>